<proteinExistence type="evidence at protein level"/>
<keyword id="KW-0012">Acyltransferase</keyword>
<keyword id="KW-0808">Transferase</keyword>
<protein>
    <recommendedName>
        <fullName evidence="6">Benzyl alcohol O-benzoyltransferase</fullName>
        <shortName evidence="6">PhBEBT1</shortName>
        <ecNumber evidence="2">2.3.1.196</ecNumber>
    </recommendedName>
    <alternativeName>
        <fullName evidence="8">Acetyl CoA:3-hydroxybenzyl alcohol acetyltransferase</fullName>
        <ecNumber evidence="2">2.3.1.-</ecNumber>
    </alternativeName>
    <alternativeName>
        <fullName evidence="8">Acetyl CoA:benzyl alcohol acetyltransferase</fullName>
        <ecNumber evidence="2">2.3.1.224</ecNumber>
    </alternativeName>
    <alternativeName>
        <fullName evidence="8">Acetyl CoA:geraniol acetyltransferase</fullName>
        <ecNumber evidence="2">2.3.1.-</ecNumber>
    </alternativeName>
    <alternativeName>
        <fullName evidence="6">Benzoyl coenzyme A:benzyl alcohol benzoyl transferase</fullName>
        <shortName evidence="7">Benzyl CoA:benzyl alcohol/phenylethanol benzoyltransferase</shortName>
        <shortName evidence="7">PhBPBT</shortName>
    </alternativeName>
    <alternativeName>
        <fullName evidence="8">Benzyl CoA:(3Z)-hex-3-en-1-ol benzoyltransferase</fullName>
        <ecNumber evidence="2">2.3.1.-</ecNumber>
    </alternativeName>
    <alternativeName>
        <fullName evidence="8">Benzyl CoA:2-phenylethanol benzoyltransferase</fullName>
        <ecNumber evidence="2">2.3.1.-</ecNumber>
    </alternativeName>
    <alternativeName>
        <fullName evidence="8">Benzyl CoA:3-hydroxybenzyl alcohol benzoyltransferase</fullName>
        <ecNumber evidence="2">2.3.1.-</ecNumber>
    </alternativeName>
    <alternativeName>
        <fullName evidence="8">Benzyl CoA:butanol benzoyltransferase</fullName>
        <ecNumber evidence="2">2.3.1.-</ecNumber>
    </alternativeName>
    <alternativeName>
        <fullName evidence="8">Benzyl CoA:geraniol benzoyltransferase</fullName>
        <ecNumber evidence="2">2.3.1.-</ecNumber>
    </alternativeName>
    <alternativeName>
        <fullName evidence="8">Benzyl CoA:octan-1-ol benzoyltransferase</fullName>
        <ecNumber evidence="2">2.3.1.-</ecNumber>
    </alternativeName>
</protein>
<name>BEBT1_PETHY</name>
<comment type="function">
    <text evidence="2 3 4">Involved in the production of volatile organic compounds (VOCs), including floral volatile benzenoids and phenylpropanoids (FVBP), in flowers of fragrant cultivars (e.g. cv. Mitchell and cv. V26), scent attracting pollinators (e.g. the night-active hawkmoth pollinator Manduca sexta) (PubMed:15286288, PubMed:20070567). Acyltransferase that catalyzes the transfer of benzoyl and acetyl moieties to a large variety of potential substrate alcohols, and involved in the formation of volatile esters benzyl benzoate and phenylethyl benzoate from benzoyl-CoA (PubMed:15286288, PubMed:17194766, PubMed:20070567). With acetyl-CoA, mainly active on benzyl alcohol, and, to a lower extent, on 3-hydroxybenzyl alcohol, geraniol, and 2-phenylethanol, but barely active on butanol, 1-octanol, 4-hydroxy-benzyl alcohol, 2-hexanol, cis-3-hexen-1-ol and linalool (PubMed:15286288). With benzoyl-CoA, mainly active on benzyl alcohol, but also efficient on several substrates, including 3-hydroxybenzyl alcohol, 2-phenylethanol, geraniol, butanol, cis-3-hexen-1-ol and 1-octanol (PubMed:15286288).</text>
</comment>
<comment type="catalytic activity">
    <reaction evidence="2">
        <text>benzyl alcohol + benzoyl-CoA = benzyl benzoate + CoA</text>
        <dbReference type="Rhea" id="RHEA:30411"/>
        <dbReference type="ChEBI" id="CHEBI:17987"/>
        <dbReference type="ChEBI" id="CHEBI:41237"/>
        <dbReference type="ChEBI" id="CHEBI:57287"/>
        <dbReference type="ChEBI" id="CHEBI:57369"/>
        <dbReference type="EC" id="2.3.1.196"/>
    </reaction>
    <physiologicalReaction direction="left-to-right" evidence="2">
        <dbReference type="Rhea" id="RHEA:30412"/>
    </physiologicalReaction>
</comment>
<comment type="catalytic activity">
    <reaction evidence="2">
        <text>benzyl alcohol + acetyl-CoA = benzyl acetate + CoA</text>
        <dbReference type="Rhea" id="RHEA:36147"/>
        <dbReference type="ChEBI" id="CHEBI:17987"/>
        <dbReference type="ChEBI" id="CHEBI:52051"/>
        <dbReference type="ChEBI" id="CHEBI:57287"/>
        <dbReference type="ChEBI" id="CHEBI:57288"/>
        <dbReference type="EC" id="2.3.1.224"/>
    </reaction>
    <physiologicalReaction direction="left-to-right" evidence="2">
        <dbReference type="Rhea" id="RHEA:36148"/>
    </physiologicalReaction>
</comment>
<comment type="catalytic activity">
    <reaction evidence="2">
        <text>3-hydroxybenzyl alcohol + acetyl-CoA = 3-hydroxy-benzyl acetate + CoA</text>
        <dbReference type="Rhea" id="RHEA:64828"/>
        <dbReference type="ChEBI" id="CHEBI:17069"/>
        <dbReference type="ChEBI" id="CHEBI:57287"/>
        <dbReference type="ChEBI" id="CHEBI:57288"/>
        <dbReference type="ChEBI" id="CHEBI:156232"/>
    </reaction>
    <physiologicalReaction direction="left-to-right" evidence="2">
        <dbReference type="Rhea" id="RHEA:64829"/>
    </physiologicalReaction>
</comment>
<comment type="catalytic activity">
    <reaction evidence="2">
        <text>3-hydroxybenzyl alcohol + benzoyl-CoA = 3-hydroxy-benzyl benzoate + CoA</text>
        <dbReference type="Rhea" id="RHEA:64832"/>
        <dbReference type="ChEBI" id="CHEBI:17069"/>
        <dbReference type="ChEBI" id="CHEBI:57287"/>
        <dbReference type="ChEBI" id="CHEBI:57369"/>
        <dbReference type="ChEBI" id="CHEBI:156231"/>
    </reaction>
    <physiologicalReaction direction="left-to-right" evidence="2">
        <dbReference type="Rhea" id="RHEA:64833"/>
    </physiologicalReaction>
</comment>
<comment type="catalytic activity">
    <reaction evidence="2">
        <text>2-phenylethanol + benzoyl-CoA = phenethyl benzoate + CoA</text>
        <dbReference type="Rhea" id="RHEA:64840"/>
        <dbReference type="ChEBI" id="CHEBI:49000"/>
        <dbReference type="ChEBI" id="CHEBI:57287"/>
        <dbReference type="ChEBI" id="CHEBI:57369"/>
        <dbReference type="ChEBI" id="CHEBI:156233"/>
    </reaction>
    <physiologicalReaction direction="left-to-right" evidence="2">
        <dbReference type="Rhea" id="RHEA:64841"/>
    </physiologicalReaction>
</comment>
<comment type="catalytic activity">
    <reaction evidence="2">
        <text>(3Z)-hex-3-en-1-ol + benzoyl-CoA = (3Z)-hex-3-en-1-yl benzoate + CoA</text>
        <dbReference type="Rhea" id="RHEA:64848"/>
        <dbReference type="ChEBI" id="CHEBI:28857"/>
        <dbReference type="ChEBI" id="CHEBI:57287"/>
        <dbReference type="ChEBI" id="CHEBI:57369"/>
        <dbReference type="ChEBI" id="CHEBI:156235"/>
    </reaction>
    <physiologicalReaction direction="left-to-right" evidence="2">
        <dbReference type="Rhea" id="RHEA:64849"/>
    </physiologicalReaction>
</comment>
<comment type="catalytic activity">
    <reaction evidence="2">
        <text>(2E)-geraniol + acetyl-CoA = (2E)-geranyl acetate + CoA</text>
        <dbReference type="Rhea" id="RHEA:64624"/>
        <dbReference type="ChEBI" id="CHEBI:5331"/>
        <dbReference type="ChEBI" id="CHEBI:17447"/>
        <dbReference type="ChEBI" id="CHEBI:57287"/>
        <dbReference type="ChEBI" id="CHEBI:57288"/>
    </reaction>
    <physiologicalReaction direction="left-to-right" evidence="2">
        <dbReference type="Rhea" id="RHEA:64625"/>
    </physiologicalReaction>
</comment>
<comment type="catalytic activity">
    <reaction evidence="2">
        <text>butan-1-ol + benzoyl-CoA = butyl benzoate + CoA</text>
        <dbReference type="Rhea" id="RHEA:64636"/>
        <dbReference type="ChEBI" id="CHEBI:28885"/>
        <dbReference type="ChEBI" id="CHEBI:57287"/>
        <dbReference type="ChEBI" id="CHEBI:57369"/>
        <dbReference type="ChEBI" id="CHEBI:156070"/>
    </reaction>
    <physiologicalReaction direction="left-to-right" evidence="2">
        <dbReference type="Rhea" id="RHEA:64637"/>
    </physiologicalReaction>
</comment>
<comment type="catalytic activity">
    <reaction evidence="2">
        <text>(2E)-geraniol + benzoyl-CoA = (2E)-geranyl benzoate + CoA</text>
        <dbReference type="Rhea" id="RHEA:64844"/>
        <dbReference type="ChEBI" id="CHEBI:17447"/>
        <dbReference type="ChEBI" id="CHEBI:57287"/>
        <dbReference type="ChEBI" id="CHEBI:57369"/>
        <dbReference type="ChEBI" id="CHEBI:156234"/>
    </reaction>
    <physiologicalReaction direction="left-to-right" evidence="2">
        <dbReference type="Rhea" id="RHEA:64845"/>
    </physiologicalReaction>
</comment>
<comment type="catalytic activity">
    <reaction evidence="2">
        <text>octan-1-ol + benzoyl-CoA = octyl benzoate + CoA</text>
        <dbReference type="Rhea" id="RHEA:64852"/>
        <dbReference type="ChEBI" id="CHEBI:16188"/>
        <dbReference type="ChEBI" id="CHEBI:57287"/>
        <dbReference type="ChEBI" id="CHEBI:57369"/>
        <dbReference type="ChEBI" id="CHEBI:156236"/>
    </reaction>
    <physiologicalReaction direction="left-to-right" evidence="2">
        <dbReference type="Rhea" id="RHEA:64853"/>
    </physiologicalReaction>
</comment>
<comment type="biophysicochemical properties">
    <kinetics>
        <KM evidence="2">682 uM for acetyl-CoA</KM>
        <KM evidence="2">1555 uM for benzoyl-CoA (in the presence of benzyl alcohol)</KM>
        <KM evidence="2">875 uM for benzoyl-CoA (in the presence of phenyl alcohol)</KM>
        <KM evidence="2">28.6 uM for benzyl alcohol (in the presence of acetyl-CoA)</KM>
        <KM evidence="2">444 uM for benzyl alcohol (in the presence of benzoyl-CoA)</KM>
        <KM evidence="2">686 uM for phenyl ethanol (in the presence of benzoyl-CoA)</KM>
        <Vmax evidence="2">15.0 nmol/sec/mg enzyme with acetyl-CoA as substrate</Vmax>
        <Vmax evidence="2">194.0 nmol/sec/mg enzyme with benzoyl-CoA as substrate (in the presence of benzyl alcohol)</Vmax>
        <Vmax evidence="2">279.0 nmol/sec/mg enzyme with benzoyl-CoA as substrate (in the presence of phenyl alcohol)</Vmax>
        <Vmax evidence="2">5.52 nmol/sec/mg enzyme with benzyl alcohol as substrate (in the presence of acetyl-CoA)</Vmax>
        <Vmax evidence="2">125.5 nmol/sec/mg enzyme with benzyl alcohol as substrate (in the presence of benzoyl-CoA)</Vmax>
        <Vmax evidence="2">122.9 nmol/sec/mg enzyme with phenyl ethanol as substrate (in the presence of benzoyl-CoA)</Vmax>
        <text evidence="2">kcat is 4.4 sec(-1) with acetyl-CoA as substrate (PubMed:15286288). kcat is 57.1 sec(-1) with benzoyl-CoA as substrate (in the presence of benzyl alcohol) (PubMed:15286288). kcat is 81.3 sec(-1) with benzoyl-CoA as substrate (in the presence of phenyl alcohol) (PubMed:15286288). kcat is 1.61 sec(-1) with benzyl alcohol as substrate (in the presence of acetyl-CoA) (PubMed:15286288). kcat is 36.9 sec(-1) with benzyl alcohol as substrate (in the presence of benzoyl-CoA) (PubMed:15286288). kcat is 35.8 sec(-1) with phenyl ethanol as substrate (in the presence of benzoyl-CoA) (PubMed:15286288).</text>
    </kinetics>
</comment>
<comment type="pathway">
    <text evidence="2">Aromatic compound metabolism; benzoyl-CoA degradation.</text>
</comment>
<comment type="tissue specificity">
    <text evidence="2 3 5">Specifically expressed in flowers, mainly in the limb of flowers corollas, and, at low levels, in roots, stems, sepals and leaves.</text>
</comment>
<comment type="developmental stage">
    <text evidence="2 5">In corollas, accumulates progressively during flower development, from buds to anthesis, but fades out in senescing flowers.</text>
</comment>
<comment type="induction">
    <text evidence="2">Circadian-regulation with peak levels occurring during the night period (11 pm) in flowers.</text>
</comment>
<comment type="disruption phenotype">
    <text evidence="3 4">Decreased endogenous pool of benzoic acid (BA)/benzylbenzoate and lower methylbenzoate emission, but increased emission of benzyl alcohol and benzylaldehyde (PubMed:17194766, PubMed:20070567). Increase in the flux from cinnamic acid (CA) to coumaric acid and to flavonoids (PubMed:17194766). Delayed flowering time, large flowers and anthers, delayed anthesis, as well as large and dark seeds accumulating abnormal high levels of flavonoids and anthocyanins (PubMed:17194766). Greater internode length and stem diameter associated with an increased lignin accumulation (PubMed:17194766). Fewer first-order lateral branches but longer primary roots (PubMed:17194766). Seedlings exhibit epinastic cotyledons with fused or supernumerary cotyledons (PubMed:17194766). Increased auxin flux in roots (PubMed:17194766).</text>
</comment>
<comment type="similarity">
    <text evidence="8">Belongs to the plant acyltransferase family.</text>
</comment>
<dbReference type="EC" id="2.3.1.196" evidence="2"/>
<dbReference type="EC" id="2.3.1.-" evidence="2"/>
<dbReference type="EC" id="2.3.1.224" evidence="2"/>
<dbReference type="EMBL" id="AY563157">
    <property type="protein sequence ID" value="AAT68601.1"/>
    <property type="molecule type" value="mRNA"/>
</dbReference>
<dbReference type="EMBL" id="AY611496">
    <property type="protein sequence ID" value="AAU06226.1"/>
    <property type="molecule type" value="mRNA"/>
</dbReference>
<dbReference type="SMR" id="Q6E593"/>
<dbReference type="KEGG" id="ag:AAU06226"/>
<dbReference type="BRENDA" id="2.3.1.196">
    <property type="organism ID" value="4700"/>
</dbReference>
<dbReference type="UniPathway" id="UPA00739"/>
<dbReference type="GO" id="GO:0102720">
    <property type="term" value="F:acetyl-coenzyme A:acetyl alcohol acetyltransferase activity"/>
    <property type="evidence" value="ECO:0007669"/>
    <property type="project" value="UniProtKB-EC"/>
</dbReference>
<dbReference type="GO" id="GO:0006084">
    <property type="term" value="P:acetyl-CoA metabolic process"/>
    <property type="evidence" value="ECO:0000314"/>
    <property type="project" value="UniProtKB"/>
</dbReference>
<dbReference type="GO" id="GO:1901787">
    <property type="term" value="P:benzoyl-CoA metabolic process"/>
    <property type="evidence" value="ECO:0000314"/>
    <property type="project" value="UniProtKB"/>
</dbReference>
<dbReference type="GO" id="GO:0007623">
    <property type="term" value="P:circadian rhythm"/>
    <property type="evidence" value="ECO:0000270"/>
    <property type="project" value="UniProtKB"/>
</dbReference>
<dbReference type="GO" id="GO:0010597">
    <property type="term" value="P:green leaf volatile biosynthetic process"/>
    <property type="evidence" value="ECO:0000314"/>
    <property type="project" value="UniProtKB"/>
</dbReference>
<dbReference type="Gene3D" id="3.30.559.10">
    <property type="entry name" value="Chloramphenicol acetyltransferase-like domain"/>
    <property type="match status" value="2"/>
</dbReference>
<dbReference type="InterPro" id="IPR023213">
    <property type="entry name" value="CAT-like_dom_sf"/>
</dbReference>
<dbReference type="InterPro" id="IPR050898">
    <property type="entry name" value="Plant_acyltransferase"/>
</dbReference>
<dbReference type="PANTHER" id="PTHR31147">
    <property type="entry name" value="ACYL TRANSFERASE 4"/>
    <property type="match status" value="1"/>
</dbReference>
<dbReference type="PANTHER" id="PTHR31147:SF66">
    <property type="entry name" value="OS05G0315700 PROTEIN"/>
    <property type="match status" value="1"/>
</dbReference>
<dbReference type="Pfam" id="PF02458">
    <property type="entry name" value="Transferase"/>
    <property type="match status" value="1"/>
</dbReference>
<dbReference type="SUPFAM" id="SSF52777">
    <property type="entry name" value="CoA-dependent acyltransferases"/>
    <property type="match status" value="1"/>
</dbReference>
<feature type="chain" id="PRO_0000451508" description="Benzyl alcohol O-benzoyltransferase">
    <location>
        <begin position="1"/>
        <end position="460"/>
    </location>
</feature>
<feature type="active site" description="Proton acceptor" evidence="1">
    <location>
        <position position="167"/>
    </location>
</feature>
<feature type="active site" description="Proton acceptor" evidence="1">
    <location>
        <position position="382"/>
    </location>
</feature>
<gene>
    <name evidence="6" type="primary">BEBT1</name>
    <name evidence="7" type="synonym">BPBT</name>
</gene>
<accession>Q6E593</accession>
<organism>
    <name type="scientific">Petunia hybrida</name>
    <name type="common">Petunia</name>
    <dbReference type="NCBI Taxonomy" id="4102"/>
    <lineage>
        <taxon>Eukaryota</taxon>
        <taxon>Viridiplantae</taxon>
        <taxon>Streptophyta</taxon>
        <taxon>Embryophyta</taxon>
        <taxon>Tracheophyta</taxon>
        <taxon>Spermatophyta</taxon>
        <taxon>Magnoliopsida</taxon>
        <taxon>eudicotyledons</taxon>
        <taxon>Gunneridae</taxon>
        <taxon>Pentapetalae</taxon>
        <taxon>asterids</taxon>
        <taxon>lamiids</taxon>
        <taxon>Solanales</taxon>
        <taxon>Solanaceae</taxon>
        <taxon>Petunioideae</taxon>
        <taxon>Petunia</taxon>
    </lineage>
</organism>
<sequence length="460" mass="51042">MDSKQSSELVFTVRRQEPELIAPAKPTPRETKFLSDIDDQEGLRFQIPVINFYRKDSSMGGKDPVEVIKKAIAETLVFYYPFAGRLREGNDRKLMVDCTGEGVMFVEANADVTLEEFGDELQPPFPCLEELLYDVPGSAGVLHCPLLLIQVTRLRCGGFIFALRLNHTMSDAPGLVQFMTAVGEMARGATAPSTLPVWCRELLNARNPPQVTCTHHEYEEVPDTKGTLIPLDDMVHRSFFFGPTEVSALRRFVPPHLHNCSTFEVLTAALWRCRTISIKPDPEEEVRVLCIVNARSRFNPQLPSGYYGNAFAFPVAVTTAEKLCKNPLGYALELVKKTKSDVTEEYMKSVADLMVIKGRPHFTVVRTYLVSDVTRAGFGEVDFGWGKAVYGGPAKGGVGAIPGVASFYIPFRNKKGENGIVVPICLPGFAMEKFVKELDSMLKGDAQLDNKKYAFITPAL</sequence>
<reference key="1">
    <citation type="journal article" date="2004" name="Plant Physiol.">
        <title>Understanding in vivo benzenoid metabolism in petunia petal tissue.</title>
        <authorList>
            <person name="Boatright J."/>
            <person name="Negre F."/>
            <person name="Chen X."/>
            <person name="Kish C.M."/>
            <person name="Wood B."/>
            <person name="Peel G."/>
            <person name="Orlova I."/>
            <person name="Gang D."/>
            <person name="Rhodes D."/>
            <person name="Dudareva N."/>
        </authorList>
    </citation>
    <scope>NUCLEOTIDE SEQUENCE [MRNA]</scope>
    <scope>FUNCTION</scope>
    <scope>CATALYTIC ACTIVITY</scope>
    <scope>PATHWAY</scope>
    <scope>BIOPHYSICOCHEMICAL PROPERTIES</scope>
    <scope>TISSUE SPECIFICITY</scope>
    <scope>DEVELOPMENTAL STAGE</scope>
    <scope>INDUCTION</scope>
    <source>
        <strain>cv. Mitchell</strain>
        <tissue>Corolla</tissue>
    </source>
</reference>
<reference key="2">
    <citation type="journal article" date="2006" name="Plant Cell">
        <title>Reduction of benzenoid synthesis in petunia flowers reveals multiple pathways to benzoic acid and enhancement in auxin transport.</title>
        <authorList>
            <person name="Orlova I."/>
            <person name="Marshall-Colon A."/>
            <person name="Schnepp J."/>
            <person name="Wood B."/>
            <person name="Varbanova M."/>
            <person name="Fridman E."/>
            <person name="Blakeslee J.J."/>
            <person name="Peer W.A."/>
            <person name="Murphy A.S."/>
            <person name="Rhodes D."/>
            <person name="Pichersky E."/>
            <person name="Dudareva N."/>
        </authorList>
    </citation>
    <scope>FUNCTION</scope>
    <scope>DISRUPTION PHENOTYPE</scope>
    <scope>TISSUE SPECIFICITY</scope>
    <source>
        <strain>cv. Mitchell</strain>
    </source>
</reference>
<reference key="3">
    <citation type="journal article" date="2010" name="Plant Cell">
        <title>EOBII, a gene encoding a flower-specific regulator of phenylpropanoid volatiles' biosynthesis in petunia.</title>
        <authorList>
            <person name="Spitzer-Rimon B."/>
            <person name="Marhevka E."/>
            <person name="Barkai O."/>
            <person name="Marton I."/>
            <person name="Edelbaum O."/>
            <person name="Masci T."/>
            <person name="Prathapani N.K."/>
            <person name="Shklarman E."/>
            <person name="Ovadis M."/>
            <person name="Vainstein A."/>
        </authorList>
    </citation>
    <scope>DEVELOPMENTAL STAGE</scope>
    <scope>TISSUE SPECIFICITY</scope>
    <source>
        <strain>cv. Violet 26</strain>
    </source>
</reference>
<reference key="4">
    <citation type="journal article" date="2010" name="Plant J.">
        <title>A kinetic model describes metabolic response to perturbations and distribution of flux control in the benzenoid network of Petunia hybrida.</title>
        <authorList>
            <person name="Colon A.M."/>
            <person name="Sengupta N."/>
            <person name="Rhodes D."/>
            <person name="Dudareva N."/>
            <person name="Morgan J."/>
        </authorList>
    </citation>
    <scope>FUNCTION</scope>
    <scope>DISRUPTION PHENOTYPE</scope>
</reference>
<evidence type="ECO:0000255" key="1"/>
<evidence type="ECO:0000269" key="2">
    <source>
    </source>
</evidence>
<evidence type="ECO:0000269" key="3">
    <source>
    </source>
</evidence>
<evidence type="ECO:0000269" key="4">
    <source>
    </source>
</evidence>
<evidence type="ECO:0000269" key="5">
    <source>
    </source>
</evidence>
<evidence type="ECO:0000303" key="6">
    <source>
    </source>
</evidence>
<evidence type="ECO:0000303" key="7">
    <source>
    </source>
</evidence>
<evidence type="ECO:0000305" key="8"/>